<evidence type="ECO:0000255" key="1">
    <source>
        <dbReference type="PROSITE-ProRule" id="PRU01371"/>
    </source>
</evidence>
<evidence type="ECO:0000256" key="2">
    <source>
        <dbReference type="SAM" id="MobiDB-lite"/>
    </source>
</evidence>
<evidence type="ECO:0000305" key="3"/>
<protein>
    <recommendedName>
        <fullName>Zinc finger C2HC domain-containing protein 1B</fullName>
    </recommendedName>
</protein>
<accession>Q32KN7</accession>
<reference key="1">
    <citation type="submission" date="2005-11" db="EMBL/GenBank/DDBJ databases">
        <authorList>
            <consortium name="NIH - Mammalian Gene Collection (MGC) project"/>
        </authorList>
    </citation>
    <scope>NUCLEOTIDE SEQUENCE [LARGE SCALE MRNA]</scope>
    <source>
        <strain>Crossbred X Angus</strain>
        <tissue>Liver</tissue>
    </source>
</reference>
<keyword id="KW-0479">Metal-binding</keyword>
<keyword id="KW-1185">Reference proteome</keyword>
<keyword id="KW-0677">Repeat</keyword>
<keyword id="KW-0862">Zinc</keyword>
<keyword id="KW-0863">Zinc-finger</keyword>
<organism>
    <name type="scientific">Bos taurus</name>
    <name type="common">Bovine</name>
    <dbReference type="NCBI Taxonomy" id="9913"/>
    <lineage>
        <taxon>Eukaryota</taxon>
        <taxon>Metazoa</taxon>
        <taxon>Chordata</taxon>
        <taxon>Craniata</taxon>
        <taxon>Vertebrata</taxon>
        <taxon>Euteleostomi</taxon>
        <taxon>Mammalia</taxon>
        <taxon>Eutheria</taxon>
        <taxon>Laurasiatheria</taxon>
        <taxon>Artiodactyla</taxon>
        <taxon>Ruminantia</taxon>
        <taxon>Pecora</taxon>
        <taxon>Bovidae</taxon>
        <taxon>Bovinae</taxon>
        <taxon>Bos</taxon>
    </lineage>
</organism>
<feature type="chain" id="PRO_0000280251" description="Zinc finger C2HC domain-containing protein 1B">
    <location>
        <begin position="1"/>
        <end position="219"/>
    </location>
</feature>
<feature type="zinc finger region" description="C2HC/C3H-type 1" evidence="1">
    <location>
        <begin position="14"/>
        <end position="43"/>
    </location>
</feature>
<feature type="zinc finger region" description="C2HC/C3H-type 2" evidence="1">
    <location>
        <begin position="117"/>
        <end position="146"/>
    </location>
</feature>
<feature type="region of interest" description="Disordered" evidence="2">
    <location>
        <begin position="190"/>
        <end position="219"/>
    </location>
</feature>
<feature type="binding site" evidence="1">
    <location>
        <position position="18"/>
    </location>
    <ligand>
        <name>Zn(2+)</name>
        <dbReference type="ChEBI" id="CHEBI:29105"/>
        <label>1</label>
    </ligand>
</feature>
<feature type="binding site" evidence="1">
    <location>
        <position position="21"/>
    </location>
    <ligand>
        <name>Zn(2+)</name>
        <dbReference type="ChEBI" id="CHEBI:29105"/>
        <label>1</label>
    </ligand>
</feature>
<feature type="binding site" evidence="1">
    <location>
        <position position="33"/>
    </location>
    <ligand>
        <name>Zn(2+)</name>
        <dbReference type="ChEBI" id="CHEBI:29105"/>
        <label>1</label>
    </ligand>
</feature>
<feature type="binding site" evidence="1">
    <location>
        <position position="37"/>
    </location>
    <ligand>
        <name>Zn(2+)</name>
        <dbReference type="ChEBI" id="CHEBI:29105"/>
        <label>1</label>
    </ligand>
</feature>
<feature type="binding site" evidence="1">
    <location>
        <position position="121"/>
    </location>
    <ligand>
        <name>Zn(2+)</name>
        <dbReference type="ChEBI" id="CHEBI:29105"/>
        <label>2</label>
    </ligand>
</feature>
<feature type="binding site" evidence="1">
    <location>
        <position position="124"/>
    </location>
    <ligand>
        <name>Zn(2+)</name>
        <dbReference type="ChEBI" id="CHEBI:29105"/>
        <label>2</label>
    </ligand>
</feature>
<feature type="binding site" evidence="1">
    <location>
        <position position="136"/>
    </location>
    <ligand>
        <name>Zn(2+)</name>
        <dbReference type="ChEBI" id="CHEBI:29105"/>
        <label>2</label>
    </ligand>
</feature>
<feature type="binding site" evidence="1">
    <location>
        <position position="140"/>
    </location>
    <ligand>
        <name>Zn(2+)</name>
        <dbReference type="ChEBI" id="CHEBI:29105"/>
        <label>2</label>
    </ligand>
</feature>
<gene>
    <name type="primary">ZC2HC1B</name>
    <name type="synonym">FAM164B</name>
</gene>
<dbReference type="EMBL" id="BC110003">
    <property type="protein sequence ID" value="AAI10004.1"/>
    <property type="molecule type" value="mRNA"/>
</dbReference>
<dbReference type="RefSeq" id="NP_001070531.1">
    <property type="nucleotide sequence ID" value="NM_001077063.2"/>
</dbReference>
<dbReference type="FunCoup" id="Q32KN7">
    <property type="interactions" value="1"/>
</dbReference>
<dbReference type="STRING" id="9913.ENSBTAP00000010726"/>
<dbReference type="PaxDb" id="9913-ENSBTAP00000010726"/>
<dbReference type="Ensembl" id="ENSBTAT00000079028.2">
    <property type="protein sequence ID" value="ENSBTAP00000064453.2"/>
    <property type="gene ID" value="ENSBTAG00000008159.5"/>
</dbReference>
<dbReference type="GeneID" id="768003"/>
<dbReference type="KEGG" id="bta:768003"/>
<dbReference type="CTD" id="153918"/>
<dbReference type="VEuPathDB" id="HostDB:ENSBTAG00000008159"/>
<dbReference type="VGNC" id="VGNC:37094">
    <property type="gene designation" value="ZC2HC1B"/>
</dbReference>
<dbReference type="eggNOG" id="KOG3940">
    <property type="taxonomic scope" value="Eukaryota"/>
</dbReference>
<dbReference type="GeneTree" id="ENSGT00940000161511"/>
<dbReference type="HOGENOM" id="CLU_098467_1_0_1"/>
<dbReference type="InParanoid" id="Q32KN7"/>
<dbReference type="OMA" id="ARHEPIC"/>
<dbReference type="OrthoDB" id="10066537at2759"/>
<dbReference type="Proteomes" id="UP000009136">
    <property type="component" value="Chromosome 9"/>
</dbReference>
<dbReference type="Bgee" id="ENSBTAG00000008159">
    <property type="expression patterns" value="Expressed in semen and 88 other cell types or tissues"/>
</dbReference>
<dbReference type="GO" id="GO:0008270">
    <property type="term" value="F:zinc ion binding"/>
    <property type="evidence" value="ECO:0007669"/>
    <property type="project" value="UniProtKB-KW"/>
</dbReference>
<dbReference type="Gene3D" id="3.30.160.60">
    <property type="entry name" value="Classic Zinc Finger"/>
    <property type="match status" value="1"/>
</dbReference>
<dbReference type="InterPro" id="IPR026319">
    <property type="entry name" value="ZC2HC1A/B-like"/>
</dbReference>
<dbReference type="InterPro" id="IPR049899">
    <property type="entry name" value="Znf_C2HC_C3H"/>
</dbReference>
<dbReference type="PANTHER" id="PTHR13555">
    <property type="entry name" value="C2H2 ZINC FINGER CGI-62-RELATED"/>
    <property type="match status" value="1"/>
</dbReference>
<dbReference type="PANTHER" id="PTHR13555:SF36">
    <property type="entry name" value="ZINC FINGER C2HC DOMAIN-CONTAINING PROTEIN 1B"/>
    <property type="match status" value="1"/>
</dbReference>
<dbReference type="Pfam" id="PF13913">
    <property type="entry name" value="zf-C2HC_2"/>
    <property type="match status" value="2"/>
</dbReference>
<dbReference type="PROSITE" id="PS52027">
    <property type="entry name" value="ZF_C2HC_C3H"/>
    <property type="match status" value="2"/>
</dbReference>
<sequence length="219" mass="24263">MAGAQPFLADGNQELFPCEVCGRRFAADVLERHGPICRKLFNKKRKPFNSLKQRLRGTDIPTVGKAPQSKPQPVRKSNWRQHHEDFINAIQSAKQCTLAIKEGRPLPPPPPPTVNPDYIQCPYCKRRFNETAASRHINFCKDQESRRVFDPAQTAARLASRAQGRAQMSPKKELTVTSAVGALLQNRALEASAAPTRPAVDPASGAKLRQGFAKSSKKD</sequence>
<name>ZC21B_BOVIN</name>
<comment type="cofactor">
    <cofactor evidence="1">
        <name>Zn(2+)</name>
        <dbReference type="ChEBI" id="CHEBI:29105"/>
    </cofactor>
</comment>
<comment type="similarity">
    <text evidence="3">Belongs to the ZC2HC1 family.</text>
</comment>
<proteinExistence type="evidence at transcript level"/>